<keyword id="KW-0378">Hydrolase</keyword>
<keyword id="KW-0408">Iron</keyword>
<keyword id="KW-0479">Metal-binding</keyword>
<keyword id="KW-0648">Protein biosynthesis</keyword>
<keyword id="KW-1185">Reference proteome</keyword>
<protein>
    <recommendedName>
        <fullName evidence="1">Peptide deformylase</fullName>
        <shortName evidence="1">PDF</shortName>
        <ecNumber evidence="1">3.5.1.88</ecNumber>
    </recommendedName>
    <alternativeName>
        <fullName evidence="1">Polypeptide deformylase</fullName>
    </alternativeName>
</protein>
<accession>A8AQI1</accession>
<name>DEF_CITK8</name>
<reference key="1">
    <citation type="submission" date="2007-08" db="EMBL/GenBank/DDBJ databases">
        <authorList>
            <consortium name="The Citrobacter koseri Genome Sequencing Project"/>
            <person name="McClelland M."/>
            <person name="Sanderson E.K."/>
            <person name="Porwollik S."/>
            <person name="Spieth J."/>
            <person name="Clifton W.S."/>
            <person name="Latreille P."/>
            <person name="Courtney L."/>
            <person name="Wang C."/>
            <person name="Pepin K."/>
            <person name="Bhonagiri V."/>
            <person name="Nash W."/>
            <person name="Johnson M."/>
            <person name="Thiruvilangam P."/>
            <person name="Wilson R."/>
        </authorList>
    </citation>
    <scope>NUCLEOTIDE SEQUENCE [LARGE SCALE GENOMIC DNA]</scope>
    <source>
        <strain>ATCC BAA-895 / CDC 4225-83 / SGSC4696</strain>
    </source>
</reference>
<feature type="chain" id="PRO_1000023127" description="Peptide deformylase">
    <location>
        <begin position="1"/>
        <end position="169"/>
    </location>
</feature>
<feature type="active site" evidence="1">
    <location>
        <position position="134"/>
    </location>
</feature>
<feature type="binding site" evidence="1">
    <location>
        <position position="91"/>
    </location>
    <ligand>
        <name>Fe cation</name>
        <dbReference type="ChEBI" id="CHEBI:24875"/>
    </ligand>
</feature>
<feature type="binding site" evidence="1">
    <location>
        <position position="133"/>
    </location>
    <ligand>
        <name>Fe cation</name>
        <dbReference type="ChEBI" id="CHEBI:24875"/>
    </ligand>
</feature>
<feature type="binding site" evidence="1">
    <location>
        <position position="137"/>
    </location>
    <ligand>
        <name>Fe cation</name>
        <dbReference type="ChEBI" id="CHEBI:24875"/>
    </ligand>
</feature>
<proteinExistence type="inferred from homology"/>
<gene>
    <name evidence="1" type="primary">def</name>
    <name type="ordered locus">CKO_04699</name>
</gene>
<sequence>MAVLQVLHIPDERLRKVAKPVEEVNAEIQRIVDDMFETMYAEEGIGLAATQVDIHQRIIVIDVSENRDERLVLINPELLEKSGETGIEEGCLSIPEQRALVPRAEKVKIRALDRDGKSFELEADGLLAICIQHEMDHLVGKLFIDYLSPLKQQRIRQKVEKLDRLNARA</sequence>
<dbReference type="EC" id="3.5.1.88" evidence="1"/>
<dbReference type="EMBL" id="CP000822">
    <property type="protein sequence ID" value="ABV15744.1"/>
    <property type="molecule type" value="Genomic_DNA"/>
</dbReference>
<dbReference type="RefSeq" id="WP_012135417.1">
    <property type="nucleotide sequence ID" value="NC_009792.1"/>
</dbReference>
<dbReference type="BMRB" id="A8AQI1"/>
<dbReference type="SMR" id="A8AQI1"/>
<dbReference type="STRING" id="290338.CKO_04699"/>
<dbReference type="GeneID" id="45138225"/>
<dbReference type="KEGG" id="cko:CKO_04699"/>
<dbReference type="HOGENOM" id="CLU_061901_2_1_6"/>
<dbReference type="OrthoDB" id="9804313at2"/>
<dbReference type="Proteomes" id="UP000008148">
    <property type="component" value="Chromosome"/>
</dbReference>
<dbReference type="GO" id="GO:0046872">
    <property type="term" value="F:metal ion binding"/>
    <property type="evidence" value="ECO:0007669"/>
    <property type="project" value="UniProtKB-KW"/>
</dbReference>
<dbReference type="GO" id="GO:0042586">
    <property type="term" value="F:peptide deformylase activity"/>
    <property type="evidence" value="ECO:0007669"/>
    <property type="project" value="UniProtKB-UniRule"/>
</dbReference>
<dbReference type="GO" id="GO:0043686">
    <property type="term" value="P:co-translational protein modification"/>
    <property type="evidence" value="ECO:0007669"/>
    <property type="project" value="TreeGrafter"/>
</dbReference>
<dbReference type="GO" id="GO:0006412">
    <property type="term" value="P:translation"/>
    <property type="evidence" value="ECO:0007669"/>
    <property type="project" value="UniProtKB-UniRule"/>
</dbReference>
<dbReference type="CDD" id="cd00487">
    <property type="entry name" value="Pep_deformylase"/>
    <property type="match status" value="1"/>
</dbReference>
<dbReference type="FunFam" id="3.90.45.10:FF:000001">
    <property type="entry name" value="Peptide deformylase"/>
    <property type="match status" value="1"/>
</dbReference>
<dbReference type="Gene3D" id="3.90.45.10">
    <property type="entry name" value="Peptide deformylase"/>
    <property type="match status" value="1"/>
</dbReference>
<dbReference type="HAMAP" id="MF_00163">
    <property type="entry name" value="Pep_deformylase"/>
    <property type="match status" value="1"/>
</dbReference>
<dbReference type="InterPro" id="IPR023635">
    <property type="entry name" value="Peptide_deformylase"/>
</dbReference>
<dbReference type="InterPro" id="IPR036821">
    <property type="entry name" value="Peptide_deformylase_sf"/>
</dbReference>
<dbReference type="NCBIfam" id="TIGR00079">
    <property type="entry name" value="pept_deformyl"/>
    <property type="match status" value="1"/>
</dbReference>
<dbReference type="NCBIfam" id="NF001159">
    <property type="entry name" value="PRK00150.1-3"/>
    <property type="match status" value="1"/>
</dbReference>
<dbReference type="PANTHER" id="PTHR10458">
    <property type="entry name" value="PEPTIDE DEFORMYLASE"/>
    <property type="match status" value="1"/>
</dbReference>
<dbReference type="PANTHER" id="PTHR10458:SF21">
    <property type="entry name" value="PEPTIDE DEFORMYLASE"/>
    <property type="match status" value="1"/>
</dbReference>
<dbReference type="Pfam" id="PF01327">
    <property type="entry name" value="Pep_deformylase"/>
    <property type="match status" value="1"/>
</dbReference>
<dbReference type="PIRSF" id="PIRSF004749">
    <property type="entry name" value="Pep_def"/>
    <property type="match status" value="1"/>
</dbReference>
<dbReference type="PRINTS" id="PR01576">
    <property type="entry name" value="PDEFORMYLASE"/>
</dbReference>
<dbReference type="SUPFAM" id="SSF56420">
    <property type="entry name" value="Peptide deformylase"/>
    <property type="match status" value="1"/>
</dbReference>
<organism>
    <name type="scientific">Citrobacter koseri (strain ATCC BAA-895 / CDC 4225-83 / SGSC4696)</name>
    <dbReference type="NCBI Taxonomy" id="290338"/>
    <lineage>
        <taxon>Bacteria</taxon>
        <taxon>Pseudomonadati</taxon>
        <taxon>Pseudomonadota</taxon>
        <taxon>Gammaproteobacteria</taxon>
        <taxon>Enterobacterales</taxon>
        <taxon>Enterobacteriaceae</taxon>
        <taxon>Citrobacter</taxon>
    </lineage>
</organism>
<evidence type="ECO:0000255" key="1">
    <source>
        <dbReference type="HAMAP-Rule" id="MF_00163"/>
    </source>
</evidence>
<comment type="function">
    <text evidence="1">Removes the formyl group from the N-terminal Met of newly synthesized proteins. Requires at least a dipeptide for an efficient rate of reaction. N-terminal L-methionine is a prerequisite for activity but the enzyme has broad specificity at other positions.</text>
</comment>
<comment type="catalytic activity">
    <reaction evidence="1">
        <text>N-terminal N-formyl-L-methionyl-[peptide] + H2O = N-terminal L-methionyl-[peptide] + formate</text>
        <dbReference type="Rhea" id="RHEA:24420"/>
        <dbReference type="Rhea" id="RHEA-COMP:10639"/>
        <dbReference type="Rhea" id="RHEA-COMP:10640"/>
        <dbReference type="ChEBI" id="CHEBI:15377"/>
        <dbReference type="ChEBI" id="CHEBI:15740"/>
        <dbReference type="ChEBI" id="CHEBI:49298"/>
        <dbReference type="ChEBI" id="CHEBI:64731"/>
        <dbReference type="EC" id="3.5.1.88"/>
    </reaction>
</comment>
<comment type="cofactor">
    <cofactor evidence="1">
        <name>Fe(2+)</name>
        <dbReference type="ChEBI" id="CHEBI:29033"/>
    </cofactor>
    <text evidence="1">Binds 1 Fe(2+) ion.</text>
</comment>
<comment type="similarity">
    <text evidence="1">Belongs to the polypeptide deformylase family.</text>
</comment>